<dbReference type="EC" id="2.6.99.2" evidence="1"/>
<dbReference type="EMBL" id="CP001291">
    <property type="protein sequence ID" value="ACK69712.1"/>
    <property type="molecule type" value="Genomic_DNA"/>
</dbReference>
<dbReference type="RefSeq" id="WP_012598658.1">
    <property type="nucleotide sequence ID" value="NC_011729.1"/>
</dbReference>
<dbReference type="SMR" id="B7K7E4"/>
<dbReference type="STRING" id="65393.PCC7424_1265"/>
<dbReference type="KEGG" id="cyc:PCC7424_1265"/>
<dbReference type="eggNOG" id="COG0854">
    <property type="taxonomic scope" value="Bacteria"/>
</dbReference>
<dbReference type="HOGENOM" id="CLU_074563_0_0_3"/>
<dbReference type="OrthoDB" id="9806590at2"/>
<dbReference type="UniPathway" id="UPA00244">
    <property type="reaction ID" value="UER00313"/>
</dbReference>
<dbReference type="Proteomes" id="UP000002384">
    <property type="component" value="Chromosome"/>
</dbReference>
<dbReference type="GO" id="GO:0005829">
    <property type="term" value="C:cytosol"/>
    <property type="evidence" value="ECO:0007669"/>
    <property type="project" value="TreeGrafter"/>
</dbReference>
<dbReference type="GO" id="GO:0033856">
    <property type="term" value="F:pyridoxine 5'-phosphate synthase activity"/>
    <property type="evidence" value="ECO:0007669"/>
    <property type="project" value="UniProtKB-EC"/>
</dbReference>
<dbReference type="GO" id="GO:0008615">
    <property type="term" value="P:pyridoxine biosynthetic process"/>
    <property type="evidence" value="ECO:0007669"/>
    <property type="project" value="UniProtKB-UniRule"/>
</dbReference>
<dbReference type="CDD" id="cd00003">
    <property type="entry name" value="PNPsynthase"/>
    <property type="match status" value="1"/>
</dbReference>
<dbReference type="Gene3D" id="3.20.20.70">
    <property type="entry name" value="Aldolase class I"/>
    <property type="match status" value="1"/>
</dbReference>
<dbReference type="HAMAP" id="MF_00279">
    <property type="entry name" value="PdxJ"/>
    <property type="match status" value="1"/>
</dbReference>
<dbReference type="InterPro" id="IPR013785">
    <property type="entry name" value="Aldolase_TIM"/>
</dbReference>
<dbReference type="InterPro" id="IPR004569">
    <property type="entry name" value="PyrdxlP_synth_PdxJ"/>
</dbReference>
<dbReference type="InterPro" id="IPR036130">
    <property type="entry name" value="Pyridoxine-5'_phos_synth"/>
</dbReference>
<dbReference type="NCBIfam" id="TIGR00559">
    <property type="entry name" value="pdxJ"/>
    <property type="match status" value="1"/>
</dbReference>
<dbReference type="NCBIfam" id="NF003623">
    <property type="entry name" value="PRK05265.1-1"/>
    <property type="match status" value="1"/>
</dbReference>
<dbReference type="NCBIfam" id="NF003625">
    <property type="entry name" value="PRK05265.1-3"/>
    <property type="match status" value="1"/>
</dbReference>
<dbReference type="NCBIfam" id="NF003627">
    <property type="entry name" value="PRK05265.1-5"/>
    <property type="match status" value="1"/>
</dbReference>
<dbReference type="PANTHER" id="PTHR30456">
    <property type="entry name" value="PYRIDOXINE 5'-PHOSPHATE SYNTHASE"/>
    <property type="match status" value="1"/>
</dbReference>
<dbReference type="PANTHER" id="PTHR30456:SF0">
    <property type="entry name" value="PYRIDOXINE 5'-PHOSPHATE SYNTHASE"/>
    <property type="match status" value="1"/>
</dbReference>
<dbReference type="Pfam" id="PF03740">
    <property type="entry name" value="PdxJ"/>
    <property type="match status" value="1"/>
</dbReference>
<dbReference type="SUPFAM" id="SSF63892">
    <property type="entry name" value="Pyridoxine 5'-phosphate synthase"/>
    <property type="match status" value="1"/>
</dbReference>
<name>PDXJ_GLOC7</name>
<keyword id="KW-0963">Cytoplasm</keyword>
<keyword id="KW-0664">Pyridoxine biosynthesis</keyword>
<keyword id="KW-1185">Reference proteome</keyword>
<keyword id="KW-0808">Transferase</keyword>
<feature type="chain" id="PRO_1000119378" description="Pyridoxine 5'-phosphate synthase">
    <location>
        <begin position="1"/>
        <end position="240"/>
    </location>
</feature>
<feature type="active site" description="Proton acceptor" evidence="1">
    <location>
        <position position="43"/>
    </location>
</feature>
<feature type="active site" description="Proton acceptor" evidence="1">
    <location>
        <position position="70"/>
    </location>
</feature>
<feature type="active site" description="Proton donor" evidence="1">
    <location>
        <position position="191"/>
    </location>
</feature>
<feature type="binding site" evidence="1">
    <location>
        <position position="7"/>
    </location>
    <ligand>
        <name>3-amino-2-oxopropyl phosphate</name>
        <dbReference type="ChEBI" id="CHEBI:57279"/>
    </ligand>
</feature>
<feature type="binding site" evidence="1">
    <location>
        <begin position="9"/>
        <end position="10"/>
    </location>
    <ligand>
        <name>1-deoxy-D-xylulose 5-phosphate</name>
        <dbReference type="ChEBI" id="CHEBI:57792"/>
    </ligand>
</feature>
<feature type="binding site" evidence="1">
    <location>
        <position position="18"/>
    </location>
    <ligand>
        <name>3-amino-2-oxopropyl phosphate</name>
        <dbReference type="ChEBI" id="CHEBI:57279"/>
    </ligand>
</feature>
<feature type="binding site" evidence="1">
    <location>
        <position position="45"/>
    </location>
    <ligand>
        <name>1-deoxy-D-xylulose 5-phosphate</name>
        <dbReference type="ChEBI" id="CHEBI:57792"/>
    </ligand>
</feature>
<feature type="binding site" evidence="1">
    <location>
        <position position="50"/>
    </location>
    <ligand>
        <name>1-deoxy-D-xylulose 5-phosphate</name>
        <dbReference type="ChEBI" id="CHEBI:57792"/>
    </ligand>
</feature>
<feature type="binding site" evidence="1">
    <location>
        <position position="100"/>
    </location>
    <ligand>
        <name>1-deoxy-D-xylulose 5-phosphate</name>
        <dbReference type="ChEBI" id="CHEBI:57792"/>
    </ligand>
</feature>
<feature type="binding site" evidence="1">
    <location>
        <position position="192"/>
    </location>
    <ligand>
        <name>3-amino-2-oxopropyl phosphate</name>
        <dbReference type="ChEBI" id="CHEBI:57279"/>
    </ligand>
</feature>
<feature type="binding site" evidence="1">
    <location>
        <begin position="213"/>
        <end position="214"/>
    </location>
    <ligand>
        <name>3-amino-2-oxopropyl phosphate</name>
        <dbReference type="ChEBI" id="CHEBI:57279"/>
    </ligand>
</feature>
<feature type="site" description="Transition state stabilizer" evidence="1">
    <location>
        <position position="151"/>
    </location>
</feature>
<gene>
    <name evidence="1" type="primary">pdxJ</name>
    <name type="ordered locus">PCC7424_1265</name>
</gene>
<accession>B7K7E4</accession>
<reference key="1">
    <citation type="journal article" date="2011" name="MBio">
        <title>Novel metabolic attributes of the genus Cyanothece, comprising a group of unicellular nitrogen-fixing Cyanobacteria.</title>
        <authorList>
            <person name="Bandyopadhyay A."/>
            <person name="Elvitigala T."/>
            <person name="Welsh E."/>
            <person name="Stockel J."/>
            <person name="Liberton M."/>
            <person name="Min H."/>
            <person name="Sherman L.A."/>
            <person name="Pakrasi H.B."/>
        </authorList>
    </citation>
    <scope>NUCLEOTIDE SEQUENCE [LARGE SCALE GENOMIC DNA]</scope>
    <source>
        <strain>PCC 7424</strain>
    </source>
</reference>
<proteinExistence type="inferred from homology"/>
<protein>
    <recommendedName>
        <fullName evidence="1">Pyridoxine 5'-phosphate synthase</fullName>
        <shortName evidence="1">PNP synthase</shortName>
        <ecNumber evidence="1">2.6.99.2</ecNumber>
    </recommendedName>
</protein>
<organism>
    <name type="scientific">Gloeothece citriformis (strain PCC 7424)</name>
    <name type="common">Cyanothece sp. (strain PCC 7424)</name>
    <dbReference type="NCBI Taxonomy" id="65393"/>
    <lineage>
        <taxon>Bacteria</taxon>
        <taxon>Bacillati</taxon>
        <taxon>Cyanobacteriota</taxon>
        <taxon>Cyanophyceae</taxon>
        <taxon>Oscillatoriophycideae</taxon>
        <taxon>Chroococcales</taxon>
        <taxon>Aphanothecaceae</taxon>
        <taxon>Gloeothece</taxon>
        <taxon>Gloeothece citriformis</taxon>
    </lineage>
</organism>
<evidence type="ECO:0000255" key="1">
    <source>
        <dbReference type="HAMAP-Rule" id="MF_00279"/>
    </source>
</evidence>
<comment type="function">
    <text evidence="1">Catalyzes the complicated ring closure reaction between the two acyclic compounds 1-deoxy-D-xylulose-5-phosphate (DXP) and 3-amino-2-oxopropyl phosphate (1-amino-acetone-3-phosphate or AAP) to form pyridoxine 5'-phosphate (PNP) and inorganic phosphate.</text>
</comment>
<comment type="catalytic activity">
    <reaction evidence="1">
        <text>3-amino-2-oxopropyl phosphate + 1-deoxy-D-xylulose 5-phosphate = pyridoxine 5'-phosphate + phosphate + 2 H2O + H(+)</text>
        <dbReference type="Rhea" id="RHEA:15265"/>
        <dbReference type="ChEBI" id="CHEBI:15377"/>
        <dbReference type="ChEBI" id="CHEBI:15378"/>
        <dbReference type="ChEBI" id="CHEBI:43474"/>
        <dbReference type="ChEBI" id="CHEBI:57279"/>
        <dbReference type="ChEBI" id="CHEBI:57792"/>
        <dbReference type="ChEBI" id="CHEBI:58589"/>
        <dbReference type="EC" id="2.6.99.2"/>
    </reaction>
</comment>
<comment type="pathway">
    <text evidence="1">Cofactor biosynthesis; pyridoxine 5'-phosphate biosynthesis; pyridoxine 5'-phosphate from D-erythrose 4-phosphate: step 5/5.</text>
</comment>
<comment type="subunit">
    <text evidence="1">Homooctamer; tetramer of dimers.</text>
</comment>
<comment type="subcellular location">
    <subcellularLocation>
        <location evidence="1">Cytoplasm</location>
    </subcellularLocation>
</comment>
<comment type="similarity">
    <text evidence="1">Belongs to the PNP synthase family.</text>
</comment>
<sequence>MLTLGVNIDHVATIRQARRTVEPDPLAAAVLAELGGADGITVHLREDRRHIQDRDVRLLRQTVRTHLNLEMAPTEEMISIALDIKPDYVTLVPEKREEVTTEGGIDLVSNFTRFAQVVDQLQGAGIPVSWFIDADPAQIEAASKTGAKFIELHTGKYAEALNEESRAQELESLKKGCEQALSLGLRVNAGHGLTYWNVYPVACLPGMEELNIGHSIISRAVLIGIDKAVREMKLAMRGQV</sequence>